<feature type="chain" id="PRO_0000192704" description="UPF0276 protein PP_2398">
    <location>
        <begin position="1"/>
        <end position="277"/>
    </location>
</feature>
<proteinExistence type="inferred from homology"/>
<keyword id="KW-1185">Reference proteome</keyword>
<name>Y2398_PSEPK</name>
<dbReference type="EMBL" id="AE015451">
    <property type="protein sequence ID" value="AAN68010.1"/>
    <property type="molecule type" value="Genomic_DNA"/>
</dbReference>
<dbReference type="RefSeq" id="NP_744546.1">
    <property type="nucleotide sequence ID" value="NC_002947.4"/>
</dbReference>
<dbReference type="RefSeq" id="WP_010953353.1">
    <property type="nucleotide sequence ID" value="NZ_CP169744.1"/>
</dbReference>
<dbReference type="SMR" id="Q88K93"/>
<dbReference type="STRING" id="160488.PP_2398"/>
<dbReference type="PaxDb" id="160488-PP_2398"/>
<dbReference type="KEGG" id="ppu:PP_2398"/>
<dbReference type="PATRIC" id="fig|160488.4.peg.2541"/>
<dbReference type="eggNOG" id="COG3220">
    <property type="taxonomic scope" value="Bacteria"/>
</dbReference>
<dbReference type="HOGENOM" id="CLU_064263_0_0_6"/>
<dbReference type="OrthoDB" id="9763101at2"/>
<dbReference type="PhylomeDB" id="Q88K93"/>
<dbReference type="BioCyc" id="PPUT160488:G1G01-2561-MONOMER"/>
<dbReference type="Proteomes" id="UP000000556">
    <property type="component" value="Chromosome"/>
</dbReference>
<dbReference type="Gene3D" id="3.20.20.150">
    <property type="entry name" value="Divalent-metal-dependent TIM barrel enzymes"/>
    <property type="match status" value="1"/>
</dbReference>
<dbReference type="HAMAP" id="MF_00697">
    <property type="entry name" value="UPF0276"/>
    <property type="match status" value="1"/>
</dbReference>
<dbReference type="InterPro" id="IPR007801">
    <property type="entry name" value="MbnB/TglH/ChrH"/>
</dbReference>
<dbReference type="InterPro" id="IPR036237">
    <property type="entry name" value="Xyl_isomerase-like_sf"/>
</dbReference>
<dbReference type="NCBIfam" id="NF003818">
    <property type="entry name" value="PRK05409.1"/>
    <property type="match status" value="1"/>
</dbReference>
<dbReference type="PANTHER" id="PTHR42194">
    <property type="entry name" value="UPF0276 PROTEIN HI_1600"/>
    <property type="match status" value="1"/>
</dbReference>
<dbReference type="PANTHER" id="PTHR42194:SF1">
    <property type="entry name" value="UPF0276 PROTEIN HI_1600"/>
    <property type="match status" value="1"/>
</dbReference>
<dbReference type="Pfam" id="PF05114">
    <property type="entry name" value="MbnB_TglH_ChrH"/>
    <property type="match status" value="1"/>
</dbReference>
<dbReference type="SUPFAM" id="SSF51658">
    <property type="entry name" value="Xylose isomerase-like"/>
    <property type="match status" value="1"/>
</dbReference>
<comment type="similarity">
    <text evidence="1">Belongs to the UPF0276 family.</text>
</comment>
<protein>
    <recommendedName>
        <fullName evidence="1">UPF0276 protein PP_2398</fullName>
    </recommendedName>
</protein>
<reference key="1">
    <citation type="journal article" date="2002" name="Environ. Microbiol.">
        <title>Complete genome sequence and comparative analysis of the metabolically versatile Pseudomonas putida KT2440.</title>
        <authorList>
            <person name="Nelson K.E."/>
            <person name="Weinel C."/>
            <person name="Paulsen I.T."/>
            <person name="Dodson R.J."/>
            <person name="Hilbert H."/>
            <person name="Martins dos Santos V.A.P."/>
            <person name="Fouts D.E."/>
            <person name="Gill S.R."/>
            <person name="Pop M."/>
            <person name="Holmes M."/>
            <person name="Brinkac L.M."/>
            <person name="Beanan M.J."/>
            <person name="DeBoy R.T."/>
            <person name="Daugherty S.C."/>
            <person name="Kolonay J.F."/>
            <person name="Madupu R."/>
            <person name="Nelson W.C."/>
            <person name="White O."/>
            <person name="Peterson J.D."/>
            <person name="Khouri H.M."/>
            <person name="Hance I."/>
            <person name="Chris Lee P."/>
            <person name="Holtzapple E.K."/>
            <person name="Scanlan D."/>
            <person name="Tran K."/>
            <person name="Moazzez A."/>
            <person name="Utterback T.R."/>
            <person name="Rizzo M."/>
            <person name="Lee K."/>
            <person name="Kosack D."/>
            <person name="Moestl D."/>
            <person name="Wedler H."/>
            <person name="Lauber J."/>
            <person name="Stjepandic D."/>
            <person name="Hoheisel J."/>
            <person name="Straetz M."/>
            <person name="Heim S."/>
            <person name="Kiewitz C."/>
            <person name="Eisen J.A."/>
            <person name="Timmis K.N."/>
            <person name="Duesterhoeft A."/>
            <person name="Tuemmler B."/>
            <person name="Fraser C.M."/>
        </authorList>
    </citation>
    <scope>NUCLEOTIDE SEQUENCE [LARGE SCALE GENOMIC DNA]</scope>
    <source>
        <strain>ATCC 47054 / DSM 6125 / CFBP 8728 / NCIMB 11950 / KT2440</strain>
    </source>
</reference>
<gene>
    <name type="ordered locus">PP_2398</name>
</gene>
<evidence type="ECO:0000255" key="1">
    <source>
        <dbReference type="HAMAP-Rule" id="MF_00697"/>
    </source>
</evidence>
<organism>
    <name type="scientific">Pseudomonas putida (strain ATCC 47054 / DSM 6125 / CFBP 8728 / NCIMB 11950 / KT2440)</name>
    <dbReference type="NCBI Taxonomy" id="160488"/>
    <lineage>
        <taxon>Bacteria</taxon>
        <taxon>Pseudomonadati</taxon>
        <taxon>Pseudomonadota</taxon>
        <taxon>Gammaproteobacteria</taxon>
        <taxon>Pseudomonadales</taxon>
        <taxon>Pseudomonadaceae</taxon>
        <taxon>Pseudomonas</taxon>
    </lineage>
</organism>
<sequence length="277" mass="30507">MFPAMLNVGLGLRRGLLPELLAMEAGAVDFLECAPENWIAVGGAYGKGLAQLAERFAVTCHGLSLSLGGSAPLDRHFLEQTRQFLDRYQVRLYSEHLSYCSDDGHLYDLMPIPFTDEAVRHVAARIRQAQEQLERRIAVENISYYAAPYQAMSELDFIQAVLEEADCDLLLDVNNVYVNACNHGYDAQQFLAGLPQARVAGMHVAGHYDEAPDLKVDTHGAAVKEDVWALYASACARFGVQPTVLERDFNYPPLAELLAETARMRAVQCAAGGQADE</sequence>
<accession>Q88K93</accession>